<proteinExistence type="inferred from homology"/>
<evidence type="ECO:0000255" key="1">
    <source>
        <dbReference type="HAMAP-Rule" id="MF_00021"/>
    </source>
</evidence>
<gene>
    <name evidence="1" type="primary">thiI</name>
    <name type="ordered locus">Pfl01_0346</name>
</gene>
<feature type="chain" id="PRO_1000074253" description="tRNA sulfurtransferase">
    <location>
        <begin position="1"/>
        <end position="484"/>
    </location>
</feature>
<feature type="domain" description="THUMP" evidence="1">
    <location>
        <begin position="63"/>
        <end position="167"/>
    </location>
</feature>
<feature type="domain" description="Rhodanese" evidence="1">
    <location>
        <begin position="405"/>
        <end position="483"/>
    </location>
</feature>
<feature type="active site" description="Cysteine persulfide intermediate" evidence="1">
    <location>
        <position position="457"/>
    </location>
</feature>
<feature type="binding site" evidence="1">
    <location>
        <begin position="185"/>
        <end position="186"/>
    </location>
    <ligand>
        <name>ATP</name>
        <dbReference type="ChEBI" id="CHEBI:30616"/>
    </ligand>
</feature>
<feature type="binding site" evidence="1">
    <location>
        <position position="267"/>
    </location>
    <ligand>
        <name>ATP</name>
        <dbReference type="ChEBI" id="CHEBI:30616"/>
    </ligand>
</feature>
<feature type="binding site" evidence="1">
    <location>
        <position position="289"/>
    </location>
    <ligand>
        <name>ATP</name>
        <dbReference type="ChEBI" id="CHEBI:30616"/>
    </ligand>
</feature>
<feature type="binding site" evidence="1">
    <location>
        <position position="298"/>
    </location>
    <ligand>
        <name>ATP</name>
        <dbReference type="ChEBI" id="CHEBI:30616"/>
    </ligand>
</feature>
<feature type="disulfide bond" description="Redox-active" evidence="1">
    <location>
        <begin position="346"/>
        <end position="457"/>
    </location>
</feature>
<protein>
    <recommendedName>
        <fullName evidence="1">tRNA sulfurtransferase</fullName>
        <ecNumber evidence="1">2.8.1.4</ecNumber>
    </recommendedName>
    <alternativeName>
        <fullName evidence="1">Sulfur carrier protein ThiS sulfurtransferase</fullName>
    </alternativeName>
    <alternativeName>
        <fullName evidence="1">Thiamine biosynthesis protein ThiI</fullName>
    </alternativeName>
    <alternativeName>
        <fullName evidence="1">tRNA 4-thiouridine synthase</fullName>
    </alternativeName>
</protein>
<comment type="function">
    <text evidence="1">Catalyzes the ATP-dependent transfer of a sulfur to tRNA to produce 4-thiouridine in position 8 of tRNAs, which functions as a near-UV photosensor. Also catalyzes the transfer of sulfur to the sulfur carrier protein ThiS, forming ThiS-thiocarboxylate. This is a step in the synthesis of thiazole, in the thiamine biosynthesis pathway. The sulfur is donated as persulfide by IscS.</text>
</comment>
<comment type="catalytic activity">
    <reaction evidence="1">
        <text>[ThiI sulfur-carrier protein]-S-sulfanyl-L-cysteine + a uridine in tRNA + 2 reduced [2Fe-2S]-[ferredoxin] + ATP + H(+) = [ThiI sulfur-carrier protein]-L-cysteine + a 4-thiouridine in tRNA + 2 oxidized [2Fe-2S]-[ferredoxin] + AMP + diphosphate</text>
        <dbReference type="Rhea" id="RHEA:24176"/>
        <dbReference type="Rhea" id="RHEA-COMP:10000"/>
        <dbReference type="Rhea" id="RHEA-COMP:10001"/>
        <dbReference type="Rhea" id="RHEA-COMP:13337"/>
        <dbReference type="Rhea" id="RHEA-COMP:13338"/>
        <dbReference type="Rhea" id="RHEA-COMP:13339"/>
        <dbReference type="Rhea" id="RHEA-COMP:13340"/>
        <dbReference type="ChEBI" id="CHEBI:15378"/>
        <dbReference type="ChEBI" id="CHEBI:29950"/>
        <dbReference type="ChEBI" id="CHEBI:30616"/>
        <dbReference type="ChEBI" id="CHEBI:33019"/>
        <dbReference type="ChEBI" id="CHEBI:33737"/>
        <dbReference type="ChEBI" id="CHEBI:33738"/>
        <dbReference type="ChEBI" id="CHEBI:61963"/>
        <dbReference type="ChEBI" id="CHEBI:65315"/>
        <dbReference type="ChEBI" id="CHEBI:136798"/>
        <dbReference type="ChEBI" id="CHEBI:456215"/>
        <dbReference type="EC" id="2.8.1.4"/>
    </reaction>
</comment>
<comment type="catalytic activity">
    <reaction evidence="1">
        <text>[ThiS sulfur-carrier protein]-C-terminal Gly-Gly-AMP + S-sulfanyl-L-cysteinyl-[cysteine desulfurase] + AH2 = [ThiS sulfur-carrier protein]-C-terminal-Gly-aminoethanethioate + L-cysteinyl-[cysteine desulfurase] + A + AMP + 2 H(+)</text>
        <dbReference type="Rhea" id="RHEA:43340"/>
        <dbReference type="Rhea" id="RHEA-COMP:12157"/>
        <dbReference type="Rhea" id="RHEA-COMP:12158"/>
        <dbReference type="Rhea" id="RHEA-COMP:12910"/>
        <dbReference type="Rhea" id="RHEA-COMP:19908"/>
        <dbReference type="ChEBI" id="CHEBI:13193"/>
        <dbReference type="ChEBI" id="CHEBI:15378"/>
        <dbReference type="ChEBI" id="CHEBI:17499"/>
        <dbReference type="ChEBI" id="CHEBI:29950"/>
        <dbReference type="ChEBI" id="CHEBI:61963"/>
        <dbReference type="ChEBI" id="CHEBI:90618"/>
        <dbReference type="ChEBI" id="CHEBI:232372"/>
        <dbReference type="ChEBI" id="CHEBI:456215"/>
    </reaction>
</comment>
<comment type="pathway">
    <text evidence="1">Cofactor biosynthesis; thiamine diphosphate biosynthesis.</text>
</comment>
<comment type="subcellular location">
    <subcellularLocation>
        <location evidence="1">Cytoplasm</location>
    </subcellularLocation>
</comment>
<comment type="similarity">
    <text evidence="1">Belongs to the ThiI family.</text>
</comment>
<sequence length="484" mass="54193">MKLIVKVFPEITIKSRPVRTKFIRQLAKNIRTVLRDLDPAVVVNGVWDNLELETRVTDPKALKEMGERLTCMPGIAHFLQIDEYPLGDFDDITEKCKQHYGDALAGKIFSVRCKRAGKHAFSSMDVEKYVGSKLRRECGAAGIDLKQPEIEVRIEVRDKRLFVIHSQHNGIGGYPLGALEQTLVLMSGGFDSTVAAYQILRRGLMTHFCFFNLGGRAHELGVMEVAHFIWKKYGSSQRVLFVSVPFEEVLGEILGKVDDSHMGVVLKRMMLRAASSIAERLHIDALVTGEAISQVSSQTLPNLSVIDCVTDKLVLRPLIVAHKQDIIDTADQIGTGDFARHMPEYCGVISVNPKTAAKRGRVEHEEQEFDMAVLERALANARLVPIDRVIDELGQDLQIEEVSEALAGQIVIDIRHPDAAEDDPLELAGIEVQTMPFYAVNARFKELDPTRQYLLYCDKGVMSRLHAHHLLSEGHANVRVYRPS</sequence>
<dbReference type="EC" id="2.8.1.4" evidence="1"/>
<dbReference type="EMBL" id="CP000094">
    <property type="protein sequence ID" value="ABA72090.1"/>
    <property type="molecule type" value="Genomic_DNA"/>
</dbReference>
<dbReference type="RefSeq" id="WP_011332034.1">
    <property type="nucleotide sequence ID" value="NC_007492.2"/>
</dbReference>
<dbReference type="SMR" id="Q3KJG6"/>
<dbReference type="KEGG" id="pfo:Pfl01_0346"/>
<dbReference type="eggNOG" id="COG0301">
    <property type="taxonomic scope" value="Bacteria"/>
</dbReference>
<dbReference type="eggNOG" id="COG0607">
    <property type="taxonomic scope" value="Bacteria"/>
</dbReference>
<dbReference type="HOGENOM" id="CLU_037952_4_1_6"/>
<dbReference type="UniPathway" id="UPA00060"/>
<dbReference type="Proteomes" id="UP000002704">
    <property type="component" value="Chromosome"/>
</dbReference>
<dbReference type="GO" id="GO:0005829">
    <property type="term" value="C:cytosol"/>
    <property type="evidence" value="ECO:0007669"/>
    <property type="project" value="TreeGrafter"/>
</dbReference>
<dbReference type="GO" id="GO:0005524">
    <property type="term" value="F:ATP binding"/>
    <property type="evidence" value="ECO:0007669"/>
    <property type="project" value="UniProtKB-UniRule"/>
</dbReference>
<dbReference type="GO" id="GO:0004810">
    <property type="term" value="F:CCA tRNA nucleotidyltransferase activity"/>
    <property type="evidence" value="ECO:0007669"/>
    <property type="project" value="InterPro"/>
</dbReference>
<dbReference type="GO" id="GO:0000049">
    <property type="term" value="F:tRNA binding"/>
    <property type="evidence" value="ECO:0007669"/>
    <property type="project" value="UniProtKB-UniRule"/>
</dbReference>
<dbReference type="GO" id="GO:0140741">
    <property type="term" value="F:tRNA-uracil-4 sulfurtransferase activity"/>
    <property type="evidence" value="ECO:0007669"/>
    <property type="project" value="UniProtKB-EC"/>
</dbReference>
<dbReference type="GO" id="GO:0009228">
    <property type="term" value="P:thiamine biosynthetic process"/>
    <property type="evidence" value="ECO:0007669"/>
    <property type="project" value="UniProtKB-KW"/>
</dbReference>
<dbReference type="GO" id="GO:0009229">
    <property type="term" value="P:thiamine diphosphate biosynthetic process"/>
    <property type="evidence" value="ECO:0007669"/>
    <property type="project" value="UniProtKB-UniRule"/>
</dbReference>
<dbReference type="GO" id="GO:0052837">
    <property type="term" value="P:thiazole biosynthetic process"/>
    <property type="evidence" value="ECO:0007669"/>
    <property type="project" value="InterPro"/>
</dbReference>
<dbReference type="GO" id="GO:0002937">
    <property type="term" value="P:tRNA 4-thiouridine biosynthesis"/>
    <property type="evidence" value="ECO:0007669"/>
    <property type="project" value="TreeGrafter"/>
</dbReference>
<dbReference type="CDD" id="cd01712">
    <property type="entry name" value="PPase_ThiI"/>
    <property type="match status" value="1"/>
</dbReference>
<dbReference type="CDD" id="cd11716">
    <property type="entry name" value="THUMP_ThiI"/>
    <property type="match status" value="1"/>
</dbReference>
<dbReference type="Gene3D" id="3.30.2130.30">
    <property type="match status" value="1"/>
</dbReference>
<dbReference type="Gene3D" id="3.40.50.620">
    <property type="entry name" value="HUPs"/>
    <property type="match status" value="1"/>
</dbReference>
<dbReference type="Gene3D" id="3.40.250.10">
    <property type="entry name" value="Rhodanese-like domain"/>
    <property type="match status" value="1"/>
</dbReference>
<dbReference type="HAMAP" id="MF_00021">
    <property type="entry name" value="ThiI"/>
    <property type="match status" value="1"/>
</dbReference>
<dbReference type="InterPro" id="IPR001763">
    <property type="entry name" value="Rhodanese-like_dom"/>
</dbReference>
<dbReference type="InterPro" id="IPR036873">
    <property type="entry name" value="Rhodanese-like_dom_sf"/>
</dbReference>
<dbReference type="InterPro" id="IPR014729">
    <property type="entry name" value="Rossmann-like_a/b/a_fold"/>
</dbReference>
<dbReference type="InterPro" id="IPR020536">
    <property type="entry name" value="ThiI_AANH"/>
</dbReference>
<dbReference type="InterPro" id="IPR054173">
    <property type="entry name" value="ThiI_fer"/>
</dbReference>
<dbReference type="InterPro" id="IPR049961">
    <property type="entry name" value="ThiI_N"/>
</dbReference>
<dbReference type="InterPro" id="IPR026340">
    <property type="entry name" value="THII_Thiazole_biosynth_dom"/>
</dbReference>
<dbReference type="InterPro" id="IPR004114">
    <property type="entry name" value="THUMP_dom"/>
</dbReference>
<dbReference type="InterPro" id="IPR049962">
    <property type="entry name" value="THUMP_ThiI"/>
</dbReference>
<dbReference type="InterPro" id="IPR003720">
    <property type="entry name" value="tRNA_STrfase"/>
</dbReference>
<dbReference type="InterPro" id="IPR050102">
    <property type="entry name" value="tRNA_sulfurtransferase_ThiI"/>
</dbReference>
<dbReference type="NCBIfam" id="TIGR04271">
    <property type="entry name" value="ThiI_C_thiazole"/>
    <property type="match status" value="1"/>
</dbReference>
<dbReference type="NCBIfam" id="TIGR00342">
    <property type="entry name" value="tRNA uracil 4-sulfurtransferase ThiI"/>
    <property type="match status" value="1"/>
</dbReference>
<dbReference type="PANTHER" id="PTHR43209">
    <property type="entry name" value="TRNA SULFURTRANSFERASE"/>
    <property type="match status" value="1"/>
</dbReference>
<dbReference type="PANTHER" id="PTHR43209:SF1">
    <property type="entry name" value="TRNA SULFURTRANSFERASE"/>
    <property type="match status" value="1"/>
</dbReference>
<dbReference type="Pfam" id="PF02568">
    <property type="entry name" value="ThiI"/>
    <property type="match status" value="1"/>
</dbReference>
<dbReference type="Pfam" id="PF22025">
    <property type="entry name" value="ThiI_fer"/>
    <property type="match status" value="1"/>
</dbReference>
<dbReference type="Pfam" id="PF02926">
    <property type="entry name" value="THUMP"/>
    <property type="match status" value="1"/>
</dbReference>
<dbReference type="SMART" id="SM00981">
    <property type="entry name" value="THUMP"/>
    <property type="match status" value="1"/>
</dbReference>
<dbReference type="SUPFAM" id="SSF52402">
    <property type="entry name" value="Adenine nucleotide alpha hydrolases-like"/>
    <property type="match status" value="1"/>
</dbReference>
<dbReference type="SUPFAM" id="SSF52821">
    <property type="entry name" value="Rhodanese/Cell cycle control phosphatase"/>
    <property type="match status" value="1"/>
</dbReference>
<dbReference type="SUPFAM" id="SSF143437">
    <property type="entry name" value="THUMP domain-like"/>
    <property type="match status" value="1"/>
</dbReference>
<dbReference type="PROSITE" id="PS50206">
    <property type="entry name" value="RHODANESE_3"/>
    <property type="match status" value="1"/>
</dbReference>
<dbReference type="PROSITE" id="PS51165">
    <property type="entry name" value="THUMP"/>
    <property type="match status" value="1"/>
</dbReference>
<reference key="1">
    <citation type="journal article" date="2009" name="Genome Biol.">
        <title>Genomic and genetic analyses of diversity and plant interactions of Pseudomonas fluorescens.</title>
        <authorList>
            <person name="Silby M.W."/>
            <person name="Cerdeno-Tarraga A.M."/>
            <person name="Vernikos G.S."/>
            <person name="Giddens S.R."/>
            <person name="Jackson R.W."/>
            <person name="Preston G.M."/>
            <person name="Zhang X.-X."/>
            <person name="Moon C.D."/>
            <person name="Gehrig S.M."/>
            <person name="Godfrey S.A.C."/>
            <person name="Knight C.G."/>
            <person name="Malone J.G."/>
            <person name="Robinson Z."/>
            <person name="Spiers A.J."/>
            <person name="Harris S."/>
            <person name="Challis G.L."/>
            <person name="Yaxley A.M."/>
            <person name="Harris D."/>
            <person name="Seeger K."/>
            <person name="Murphy L."/>
            <person name="Rutter S."/>
            <person name="Squares R."/>
            <person name="Quail M.A."/>
            <person name="Saunders E."/>
            <person name="Mavromatis K."/>
            <person name="Brettin T.S."/>
            <person name="Bentley S.D."/>
            <person name="Hothersall J."/>
            <person name="Stephens E."/>
            <person name="Thomas C.M."/>
            <person name="Parkhill J."/>
            <person name="Levy S.B."/>
            <person name="Rainey P.B."/>
            <person name="Thomson N.R."/>
        </authorList>
    </citation>
    <scope>NUCLEOTIDE SEQUENCE [LARGE SCALE GENOMIC DNA]</scope>
    <source>
        <strain>Pf0-1</strain>
    </source>
</reference>
<organism>
    <name type="scientific">Pseudomonas fluorescens (strain Pf0-1)</name>
    <dbReference type="NCBI Taxonomy" id="205922"/>
    <lineage>
        <taxon>Bacteria</taxon>
        <taxon>Pseudomonadati</taxon>
        <taxon>Pseudomonadota</taxon>
        <taxon>Gammaproteobacteria</taxon>
        <taxon>Pseudomonadales</taxon>
        <taxon>Pseudomonadaceae</taxon>
        <taxon>Pseudomonas</taxon>
    </lineage>
</organism>
<accession>Q3KJG6</accession>
<name>THII_PSEPF</name>
<keyword id="KW-0067">ATP-binding</keyword>
<keyword id="KW-0963">Cytoplasm</keyword>
<keyword id="KW-1015">Disulfide bond</keyword>
<keyword id="KW-0547">Nucleotide-binding</keyword>
<keyword id="KW-0676">Redox-active center</keyword>
<keyword id="KW-0694">RNA-binding</keyword>
<keyword id="KW-0784">Thiamine biosynthesis</keyword>
<keyword id="KW-0808">Transferase</keyword>
<keyword id="KW-0820">tRNA-binding</keyword>